<evidence type="ECO:0000250" key="1">
    <source>
        <dbReference type="UniProtKB" id="A1XQU5"/>
    </source>
</evidence>
<evidence type="ECO:0000250" key="2">
    <source>
        <dbReference type="UniProtKB" id="P61353"/>
    </source>
</evidence>
<evidence type="ECO:0000305" key="3"/>
<gene>
    <name type="primary">RPL27</name>
</gene>
<feature type="chain" id="PRO_0000126080" description="Large ribosomal subunit protein eL27">
    <location>
        <begin position="1"/>
        <end position="136"/>
    </location>
</feature>
<feature type="domain" description="KOW">
    <location>
        <begin position="5"/>
        <end position="40"/>
    </location>
</feature>
<comment type="function">
    <text evidence="2">Component of the large ribosomal subunit.</text>
</comment>
<comment type="subunit">
    <text evidence="2">Component of the large ribosomal subunit.</text>
</comment>
<comment type="subcellular location">
    <subcellularLocation>
        <location evidence="2">Cytoplasm</location>
        <location evidence="2">Cytosol</location>
    </subcellularLocation>
    <subcellularLocation>
        <location evidence="2">Cytoplasm</location>
    </subcellularLocation>
    <subcellularLocation>
        <location evidence="1">Rough endoplasmic reticulum</location>
    </subcellularLocation>
    <text evidence="1 2">Detected on cytosolic polysomes (By similarity). Detected in ribosomes that are associated with the rough endoplasmic reticulum (By similarity).</text>
</comment>
<comment type="similarity">
    <text evidence="3">Belongs to the eukaryotic ribosomal protein eL27 family.</text>
</comment>
<reference key="1">
    <citation type="journal article" date="1991" name="Nucleic Acids Res.">
        <title>Ribosomal protein L27 is identical in chick and rat.</title>
        <authorList>
            <person name="Lebeau M.-C."/>
            <person name="Alvarez-Bolado G."/>
            <person name="Braissant O."/>
            <person name="Wahli W."/>
            <person name="Catsicas S."/>
        </authorList>
    </citation>
    <scope>NUCLEOTIDE SEQUENCE [MRNA]</scope>
    <source>
        <strain>White leghorn</strain>
    </source>
</reference>
<proteinExistence type="evidence at protein level"/>
<name>RL27_CHICK</name>
<dbReference type="EMBL" id="X56852">
    <property type="protein sequence ID" value="CAA40181.1"/>
    <property type="molecule type" value="mRNA"/>
</dbReference>
<dbReference type="PIR" id="S22288">
    <property type="entry name" value="S22288"/>
</dbReference>
<dbReference type="RefSeq" id="NP_990668.1">
    <property type="nucleotide sequence ID" value="NM_205337.1"/>
</dbReference>
<dbReference type="PDB" id="8Q7Z">
    <property type="method" value="EM"/>
    <property type="resolution" value="2.50 A"/>
    <property type="chains" value="BZ=1-136"/>
</dbReference>
<dbReference type="PDB" id="8Q87">
    <property type="method" value="EM"/>
    <property type="resolution" value="2.40 A"/>
    <property type="chains" value="BZ=1-136"/>
</dbReference>
<dbReference type="PDBsum" id="8Q7Z"/>
<dbReference type="PDBsum" id="8Q87"/>
<dbReference type="SMR" id="P61355"/>
<dbReference type="BioGRID" id="676539">
    <property type="interactions" value="1"/>
</dbReference>
<dbReference type="FunCoup" id="P61355">
    <property type="interactions" value="2390"/>
</dbReference>
<dbReference type="PaxDb" id="9031-ENSGALP00000038957"/>
<dbReference type="GeneID" id="396280"/>
<dbReference type="KEGG" id="gga:396280"/>
<dbReference type="CTD" id="6155"/>
<dbReference type="VEuPathDB" id="HostDB:geneid_396280"/>
<dbReference type="eggNOG" id="KOG3418">
    <property type="taxonomic scope" value="Eukaryota"/>
</dbReference>
<dbReference type="HOGENOM" id="CLU_067359_0_1_1"/>
<dbReference type="InParanoid" id="P61355"/>
<dbReference type="OrthoDB" id="2365484at2759"/>
<dbReference type="PhylomeDB" id="P61355"/>
<dbReference type="TreeFam" id="TF314648"/>
<dbReference type="Reactome" id="R-GGA-1799339">
    <property type="pathway name" value="SRP-dependent cotranslational protein targeting to membrane"/>
</dbReference>
<dbReference type="Reactome" id="R-GGA-72689">
    <property type="pathway name" value="Formation of a pool of free 40S subunits"/>
</dbReference>
<dbReference type="Reactome" id="R-GGA-72706">
    <property type="pathway name" value="GTP hydrolysis and joining of the 60S ribosomal subunit"/>
</dbReference>
<dbReference type="Reactome" id="R-GGA-975956">
    <property type="pathway name" value="Nonsense Mediated Decay (NMD) independent of the Exon Junction Complex (EJC)"/>
</dbReference>
<dbReference type="Reactome" id="R-GGA-975957">
    <property type="pathway name" value="Nonsense Mediated Decay (NMD) enhanced by the Exon Junction Complex (EJC)"/>
</dbReference>
<dbReference type="PRO" id="PR:P61355"/>
<dbReference type="Proteomes" id="UP000000539">
    <property type="component" value="Chromosome 27"/>
</dbReference>
<dbReference type="Bgee" id="ENSGALG00000002837">
    <property type="expression patterns" value="Expressed in granulocyte and 13 other cell types or tissues"/>
</dbReference>
<dbReference type="GO" id="GO:0098556">
    <property type="term" value="C:cytoplasmic side of rough endoplasmic reticulum membrane"/>
    <property type="evidence" value="ECO:0000250"/>
    <property type="project" value="UniProtKB"/>
</dbReference>
<dbReference type="GO" id="GO:0022625">
    <property type="term" value="C:cytosolic large ribosomal subunit"/>
    <property type="evidence" value="ECO:0000318"/>
    <property type="project" value="GO_Central"/>
</dbReference>
<dbReference type="GO" id="GO:0015934">
    <property type="term" value="C:large ribosomal subunit"/>
    <property type="evidence" value="ECO:0000250"/>
    <property type="project" value="UniProtKB"/>
</dbReference>
<dbReference type="GO" id="GO:0003735">
    <property type="term" value="F:structural constituent of ribosome"/>
    <property type="evidence" value="ECO:0000318"/>
    <property type="project" value="GO_Central"/>
</dbReference>
<dbReference type="GO" id="GO:0006412">
    <property type="term" value="P:translation"/>
    <property type="evidence" value="ECO:0007669"/>
    <property type="project" value="InterPro"/>
</dbReference>
<dbReference type="CDD" id="cd06090">
    <property type="entry name" value="KOW_RPL27"/>
    <property type="match status" value="1"/>
</dbReference>
<dbReference type="FunFam" id="2.30.30.770:FF:000001">
    <property type="entry name" value="60S ribosomal protein L27"/>
    <property type="match status" value="1"/>
</dbReference>
<dbReference type="Gene3D" id="2.30.30.770">
    <property type="match status" value="1"/>
</dbReference>
<dbReference type="InterPro" id="IPR005824">
    <property type="entry name" value="KOW"/>
</dbReference>
<dbReference type="InterPro" id="IPR001141">
    <property type="entry name" value="Ribosomal_eL27"/>
</dbReference>
<dbReference type="InterPro" id="IPR018262">
    <property type="entry name" value="Ribosomal_eL27_CS"/>
</dbReference>
<dbReference type="InterPro" id="IPR041991">
    <property type="entry name" value="Ribosomal_eL27_KOW"/>
</dbReference>
<dbReference type="InterPro" id="IPR038655">
    <property type="entry name" value="Ribosomal_eL27_sf"/>
</dbReference>
<dbReference type="InterPro" id="IPR008991">
    <property type="entry name" value="Translation_prot_SH3-like_sf"/>
</dbReference>
<dbReference type="PANTHER" id="PTHR10497">
    <property type="entry name" value="60S RIBOSOMAL PROTEIN L27"/>
    <property type="match status" value="1"/>
</dbReference>
<dbReference type="Pfam" id="PF00467">
    <property type="entry name" value="KOW"/>
    <property type="match status" value="1"/>
</dbReference>
<dbReference type="Pfam" id="PF01777">
    <property type="entry name" value="Ribosomal_L27e"/>
    <property type="match status" value="1"/>
</dbReference>
<dbReference type="SMART" id="SM00739">
    <property type="entry name" value="KOW"/>
    <property type="match status" value="1"/>
</dbReference>
<dbReference type="SUPFAM" id="SSF50104">
    <property type="entry name" value="Translation proteins SH3-like domain"/>
    <property type="match status" value="1"/>
</dbReference>
<dbReference type="PROSITE" id="PS01107">
    <property type="entry name" value="RIBOSOMAL_L27E"/>
    <property type="match status" value="1"/>
</dbReference>
<keyword id="KW-0002">3D-structure</keyword>
<keyword id="KW-0963">Cytoplasm</keyword>
<keyword id="KW-0256">Endoplasmic reticulum</keyword>
<keyword id="KW-1185">Reference proteome</keyword>
<keyword id="KW-0687">Ribonucleoprotein</keyword>
<keyword id="KW-0689">Ribosomal protein</keyword>
<accession>P61355</accession>
<accession>P08526</accession>
<protein>
    <recommendedName>
        <fullName evidence="3">Large ribosomal subunit protein eL27</fullName>
    </recommendedName>
    <alternativeName>
        <fullName>60S ribosomal protein L27</fullName>
    </alternativeName>
</protein>
<sequence>MGKFMKPGKVVLVLAGRYSGRKAVIVKNIDDGTSDRPYSHALVAGIDRYPRKVTAAMGKKKIAKRSKIKSFVKVYNYNHLMPTRYSVDIPLDKTVVNKDVFRDPALKRKARREAKVKFEERYKTGKNKWFFQKLRF</sequence>
<organism>
    <name type="scientific">Gallus gallus</name>
    <name type="common">Chicken</name>
    <dbReference type="NCBI Taxonomy" id="9031"/>
    <lineage>
        <taxon>Eukaryota</taxon>
        <taxon>Metazoa</taxon>
        <taxon>Chordata</taxon>
        <taxon>Craniata</taxon>
        <taxon>Vertebrata</taxon>
        <taxon>Euteleostomi</taxon>
        <taxon>Archelosauria</taxon>
        <taxon>Archosauria</taxon>
        <taxon>Dinosauria</taxon>
        <taxon>Saurischia</taxon>
        <taxon>Theropoda</taxon>
        <taxon>Coelurosauria</taxon>
        <taxon>Aves</taxon>
        <taxon>Neognathae</taxon>
        <taxon>Galloanserae</taxon>
        <taxon>Galliformes</taxon>
        <taxon>Phasianidae</taxon>
        <taxon>Phasianinae</taxon>
        <taxon>Gallus</taxon>
    </lineage>
</organism>